<organism>
    <name type="scientific">Colwellia psychrerythraea (strain 34H / ATCC BAA-681)</name>
    <name type="common">Vibrio psychroerythus</name>
    <dbReference type="NCBI Taxonomy" id="167879"/>
    <lineage>
        <taxon>Bacteria</taxon>
        <taxon>Pseudomonadati</taxon>
        <taxon>Pseudomonadota</taxon>
        <taxon>Gammaproteobacteria</taxon>
        <taxon>Alteromonadales</taxon>
        <taxon>Colwelliaceae</taxon>
        <taxon>Colwellia</taxon>
    </lineage>
</organism>
<keyword id="KW-0028">Amino-acid biosynthesis</keyword>
<keyword id="KW-0368">Histidine biosynthesis</keyword>
<keyword id="KW-0378">Hydrolase</keyword>
<keyword id="KW-0486">Methionine biosynthesis</keyword>
<keyword id="KW-0511">Multifunctional enzyme</keyword>
<keyword id="KW-0521">NADP</keyword>
<keyword id="KW-0554">One-carbon metabolism</keyword>
<keyword id="KW-0560">Oxidoreductase</keyword>
<keyword id="KW-0658">Purine biosynthesis</keyword>
<name>FOLD1_COLP3</name>
<feature type="chain" id="PRO_0000268321" description="Bifunctional protein FolD 1">
    <location>
        <begin position="1"/>
        <end position="282"/>
    </location>
</feature>
<feature type="binding site" evidence="1">
    <location>
        <begin position="167"/>
        <end position="169"/>
    </location>
    <ligand>
        <name>NADP(+)</name>
        <dbReference type="ChEBI" id="CHEBI:58349"/>
    </ligand>
</feature>
<feature type="binding site" evidence="1">
    <location>
        <position position="192"/>
    </location>
    <ligand>
        <name>NADP(+)</name>
        <dbReference type="ChEBI" id="CHEBI:58349"/>
    </ligand>
</feature>
<reference key="1">
    <citation type="journal article" date="2005" name="Proc. Natl. Acad. Sci. U.S.A.">
        <title>The psychrophilic lifestyle as revealed by the genome sequence of Colwellia psychrerythraea 34H through genomic and proteomic analyses.</title>
        <authorList>
            <person name="Methe B.A."/>
            <person name="Nelson K.E."/>
            <person name="Deming J.W."/>
            <person name="Momen B."/>
            <person name="Melamud E."/>
            <person name="Zhang X."/>
            <person name="Moult J."/>
            <person name="Madupu R."/>
            <person name="Nelson W.C."/>
            <person name="Dodson R.J."/>
            <person name="Brinkac L.M."/>
            <person name="Daugherty S.C."/>
            <person name="Durkin A.S."/>
            <person name="DeBoy R.T."/>
            <person name="Kolonay J.F."/>
            <person name="Sullivan S.A."/>
            <person name="Zhou L."/>
            <person name="Davidsen T.M."/>
            <person name="Wu M."/>
            <person name="Huston A.L."/>
            <person name="Lewis M."/>
            <person name="Weaver B."/>
            <person name="Weidman J.F."/>
            <person name="Khouri H."/>
            <person name="Utterback T.R."/>
            <person name="Feldblyum T.V."/>
            <person name="Fraser C.M."/>
        </authorList>
    </citation>
    <scope>NUCLEOTIDE SEQUENCE [LARGE SCALE GENOMIC DNA]</scope>
    <source>
        <strain>34H / ATCC BAA-681</strain>
    </source>
</reference>
<protein>
    <recommendedName>
        <fullName evidence="1">Bifunctional protein FolD 1</fullName>
    </recommendedName>
    <domain>
        <recommendedName>
            <fullName evidence="1">Methylenetetrahydrofolate dehydrogenase</fullName>
            <ecNumber evidence="1">1.5.1.5</ecNumber>
        </recommendedName>
    </domain>
    <domain>
        <recommendedName>
            <fullName evidence="1">Methenyltetrahydrofolate cyclohydrolase</fullName>
            <ecNumber evidence="1">3.5.4.9</ecNumber>
        </recommendedName>
    </domain>
</protein>
<proteinExistence type="inferred from homology"/>
<dbReference type="EC" id="1.5.1.5" evidence="1"/>
<dbReference type="EC" id="3.5.4.9" evidence="1"/>
<dbReference type="EMBL" id="CP000083">
    <property type="protein sequence ID" value="AAZ27235.1"/>
    <property type="molecule type" value="Genomic_DNA"/>
</dbReference>
<dbReference type="SMR" id="Q47ZE0"/>
<dbReference type="STRING" id="167879.CPS_3133"/>
<dbReference type="KEGG" id="cps:CPS_3133"/>
<dbReference type="eggNOG" id="COG0190">
    <property type="taxonomic scope" value="Bacteria"/>
</dbReference>
<dbReference type="HOGENOM" id="CLU_034045_2_1_6"/>
<dbReference type="UniPathway" id="UPA00193"/>
<dbReference type="Proteomes" id="UP000000547">
    <property type="component" value="Chromosome"/>
</dbReference>
<dbReference type="GO" id="GO:0005829">
    <property type="term" value="C:cytosol"/>
    <property type="evidence" value="ECO:0007669"/>
    <property type="project" value="TreeGrafter"/>
</dbReference>
<dbReference type="GO" id="GO:0004477">
    <property type="term" value="F:methenyltetrahydrofolate cyclohydrolase activity"/>
    <property type="evidence" value="ECO:0007669"/>
    <property type="project" value="UniProtKB-UniRule"/>
</dbReference>
<dbReference type="GO" id="GO:0004488">
    <property type="term" value="F:methylenetetrahydrofolate dehydrogenase (NADP+) activity"/>
    <property type="evidence" value="ECO:0007669"/>
    <property type="project" value="UniProtKB-UniRule"/>
</dbReference>
<dbReference type="GO" id="GO:0000105">
    <property type="term" value="P:L-histidine biosynthetic process"/>
    <property type="evidence" value="ECO:0007669"/>
    <property type="project" value="UniProtKB-KW"/>
</dbReference>
<dbReference type="GO" id="GO:0009086">
    <property type="term" value="P:methionine biosynthetic process"/>
    <property type="evidence" value="ECO:0007669"/>
    <property type="project" value="UniProtKB-KW"/>
</dbReference>
<dbReference type="GO" id="GO:0006164">
    <property type="term" value="P:purine nucleotide biosynthetic process"/>
    <property type="evidence" value="ECO:0007669"/>
    <property type="project" value="UniProtKB-KW"/>
</dbReference>
<dbReference type="GO" id="GO:0035999">
    <property type="term" value="P:tetrahydrofolate interconversion"/>
    <property type="evidence" value="ECO:0007669"/>
    <property type="project" value="UniProtKB-UniRule"/>
</dbReference>
<dbReference type="CDD" id="cd01080">
    <property type="entry name" value="NAD_bind_m-THF_DH_Cyclohyd"/>
    <property type="match status" value="1"/>
</dbReference>
<dbReference type="FunFam" id="3.40.50.10860:FF:000005">
    <property type="entry name" value="C-1-tetrahydrofolate synthase, cytoplasmic, putative"/>
    <property type="match status" value="1"/>
</dbReference>
<dbReference type="Gene3D" id="3.40.50.10860">
    <property type="entry name" value="Leucine Dehydrogenase, chain A, domain 1"/>
    <property type="match status" value="1"/>
</dbReference>
<dbReference type="Gene3D" id="3.40.50.720">
    <property type="entry name" value="NAD(P)-binding Rossmann-like Domain"/>
    <property type="match status" value="1"/>
</dbReference>
<dbReference type="HAMAP" id="MF_01576">
    <property type="entry name" value="THF_DHG_CYH"/>
    <property type="match status" value="1"/>
</dbReference>
<dbReference type="InterPro" id="IPR046346">
    <property type="entry name" value="Aminoacid_DH-like_N_sf"/>
</dbReference>
<dbReference type="InterPro" id="IPR036291">
    <property type="entry name" value="NAD(P)-bd_dom_sf"/>
</dbReference>
<dbReference type="InterPro" id="IPR000672">
    <property type="entry name" value="THF_DH/CycHdrlase"/>
</dbReference>
<dbReference type="InterPro" id="IPR020630">
    <property type="entry name" value="THF_DH/CycHdrlase_cat_dom"/>
</dbReference>
<dbReference type="InterPro" id="IPR020867">
    <property type="entry name" value="THF_DH/CycHdrlase_CS"/>
</dbReference>
<dbReference type="InterPro" id="IPR020631">
    <property type="entry name" value="THF_DH/CycHdrlase_NAD-bd_dom"/>
</dbReference>
<dbReference type="NCBIfam" id="NF010788">
    <property type="entry name" value="PRK14192.1"/>
    <property type="match status" value="1"/>
</dbReference>
<dbReference type="PANTHER" id="PTHR48099:SF5">
    <property type="entry name" value="C-1-TETRAHYDROFOLATE SYNTHASE, CYTOPLASMIC"/>
    <property type="match status" value="1"/>
</dbReference>
<dbReference type="PANTHER" id="PTHR48099">
    <property type="entry name" value="C-1-TETRAHYDROFOLATE SYNTHASE, CYTOPLASMIC-RELATED"/>
    <property type="match status" value="1"/>
</dbReference>
<dbReference type="Pfam" id="PF00763">
    <property type="entry name" value="THF_DHG_CYH"/>
    <property type="match status" value="1"/>
</dbReference>
<dbReference type="Pfam" id="PF02882">
    <property type="entry name" value="THF_DHG_CYH_C"/>
    <property type="match status" value="1"/>
</dbReference>
<dbReference type="PRINTS" id="PR00085">
    <property type="entry name" value="THFDHDRGNASE"/>
</dbReference>
<dbReference type="SUPFAM" id="SSF53223">
    <property type="entry name" value="Aminoacid dehydrogenase-like, N-terminal domain"/>
    <property type="match status" value="1"/>
</dbReference>
<dbReference type="SUPFAM" id="SSF51735">
    <property type="entry name" value="NAD(P)-binding Rossmann-fold domains"/>
    <property type="match status" value="1"/>
</dbReference>
<dbReference type="PROSITE" id="PS00767">
    <property type="entry name" value="THF_DHG_CYH_2"/>
    <property type="match status" value="1"/>
</dbReference>
<comment type="function">
    <text evidence="1">Catalyzes the oxidation of 5,10-methylenetetrahydrofolate to 5,10-methenyltetrahydrofolate and then the hydrolysis of 5,10-methenyltetrahydrofolate to 10-formyltetrahydrofolate.</text>
</comment>
<comment type="catalytic activity">
    <reaction evidence="1">
        <text>(6R)-5,10-methylene-5,6,7,8-tetrahydrofolate + NADP(+) = (6R)-5,10-methenyltetrahydrofolate + NADPH</text>
        <dbReference type="Rhea" id="RHEA:22812"/>
        <dbReference type="ChEBI" id="CHEBI:15636"/>
        <dbReference type="ChEBI" id="CHEBI:57455"/>
        <dbReference type="ChEBI" id="CHEBI:57783"/>
        <dbReference type="ChEBI" id="CHEBI:58349"/>
        <dbReference type="EC" id="1.5.1.5"/>
    </reaction>
</comment>
<comment type="catalytic activity">
    <reaction evidence="1">
        <text>(6R)-5,10-methenyltetrahydrofolate + H2O = (6R)-10-formyltetrahydrofolate + H(+)</text>
        <dbReference type="Rhea" id="RHEA:23700"/>
        <dbReference type="ChEBI" id="CHEBI:15377"/>
        <dbReference type="ChEBI" id="CHEBI:15378"/>
        <dbReference type="ChEBI" id="CHEBI:57455"/>
        <dbReference type="ChEBI" id="CHEBI:195366"/>
        <dbReference type="EC" id="3.5.4.9"/>
    </reaction>
</comment>
<comment type="pathway">
    <text evidence="1">One-carbon metabolism; tetrahydrofolate interconversion.</text>
</comment>
<comment type="subunit">
    <text evidence="1">Homodimer.</text>
</comment>
<comment type="similarity">
    <text evidence="1">Belongs to the tetrahydrofolate dehydrogenase/cyclohydrolase family.</text>
</comment>
<sequence length="282" mass="30433">MSALILDGKSVTKKSEEDLRSRVARLKELSNGAVPILATILVGNDPSSATYVKMKSNACTRVGMDSLKVEMSEETTTEELLAEIAKLNANPNIHGILLQHPVPPQINERQCFDSIDLSKDVDGVTCWGFGRMAMNETSYGSATPKGIIRILEAYDIQLEGKHAVVVGRSPILGKPMAMMLLNKNCTVTICHSKTVGLDKIIKTADIVVGAVGKPEFIKADWIKDDAVVIDAGYHEGGIGDIELQPLMSRVKAYTPVPGGVGPMTINTLIYQTVEACELKLAQ</sequence>
<accession>Q47ZE0</accession>
<gene>
    <name evidence="1" type="primary">folD1</name>
    <name type="ordered locus">CPS_3133</name>
</gene>
<evidence type="ECO:0000255" key="1">
    <source>
        <dbReference type="HAMAP-Rule" id="MF_01576"/>
    </source>
</evidence>